<proteinExistence type="inferred from homology"/>
<protein>
    <recommendedName>
        <fullName evidence="1">Large ribosomal subunit protein bL25</fullName>
    </recommendedName>
    <alternativeName>
        <fullName evidence="3">50S ribosomal protein L25</fullName>
    </alternativeName>
    <alternativeName>
        <fullName evidence="1">General stress protein CTC</fullName>
    </alternativeName>
</protein>
<gene>
    <name evidence="1" type="primary">rplY</name>
    <name evidence="1" type="synonym">ctc</name>
    <name type="ordered locus">CTN_0831</name>
</gene>
<reference key="1">
    <citation type="submission" date="2007-11" db="EMBL/GenBank/DDBJ databases">
        <title>The genome sequence of the hyperthermophilic bacterium Thermotoga neapolitana.</title>
        <authorList>
            <person name="Lim S.K."/>
            <person name="Kim J.S."/>
            <person name="Cha S.H."/>
            <person name="Park B.C."/>
            <person name="Lee D.S."/>
            <person name="Tae H.S."/>
            <person name="Kim S.-J."/>
            <person name="Kim J.J."/>
            <person name="Park K.J."/>
            <person name="Lee S.Y."/>
        </authorList>
    </citation>
    <scope>NUCLEOTIDE SEQUENCE [LARGE SCALE GENOMIC DNA]</scope>
    <source>
        <strain>ATCC 49049 / DSM 4359 / NBRC 107923 / NS-E</strain>
    </source>
</reference>
<dbReference type="EMBL" id="CP000916">
    <property type="protein sequence ID" value="ACM23007.1"/>
    <property type="molecule type" value="Genomic_DNA"/>
</dbReference>
<dbReference type="RefSeq" id="WP_015919324.1">
    <property type="nucleotide sequence ID" value="NC_011978.1"/>
</dbReference>
<dbReference type="SMR" id="B9K7S4"/>
<dbReference type="STRING" id="309803.CTN_0831"/>
<dbReference type="KEGG" id="tna:CTN_0831"/>
<dbReference type="eggNOG" id="COG1825">
    <property type="taxonomic scope" value="Bacteria"/>
</dbReference>
<dbReference type="HOGENOM" id="CLU_075939_2_1_0"/>
<dbReference type="Proteomes" id="UP000000445">
    <property type="component" value="Chromosome"/>
</dbReference>
<dbReference type="GO" id="GO:0022625">
    <property type="term" value="C:cytosolic large ribosomal subunit"/>
    <property type="evidence" value="ECO:0007669"/>
    <property type="project" value="TreeGrafter"/>
</dbReference>
<dbReference type="GO" id="GO:0008097">
    <property type="term" value="F:5S rRNA binding"/>
    <property type="evidence" value="ECO:0007669"/>
    <property type="project" value="InterPro"/>
</dbReference>
<dbReference type="GO" id="GO:0003735">
    <property type="term" value="F:structural constituent of ribosome"/>
    <property type="evidence" value="ECO:0007669"/>
    <property type="project" value="InterPro"/>
</dbReference>
<dbReference type="GO" id="GO:0006412">
    <property type="term" value="P:translation"/>
    <property type="evidence" value="ECO:0007669"/>
    <property type="project" value="UniProtKB-UniRule"/>
</dbReference>
<dbReference type="CDD" id="cd00495">
    <property type="entry name" value="Ribosomal_L25_TL5_CTC"/>
    <property type="match status" value="1"/>
</dbReference>
<dbReference type="FunFam" id="2.170.120.20:FF:000003">
    <property type="entry name" value="50S ribosomal protein L25"/>
    <property type="match status" value="1"/>
</dbReference>
<dbReference type="Gene3D" id="2.170.120.20">
    <property type="entry name" value="Ribosomal protein L25, beta domain"/>
    <property type="match status" value="1"/>
</dbReference>
<dbReference type="Gene3D" id="2.40.240.10">
    <property type="entry name" value="Ribosomal Protein L25, Chain P"/>
    <property type="match status" value="1"/>
</dbReference>
<dbReference type="HAMAP" id="MF_01334">
    <property type="entry name" value="Ribosomal_bL25_CTC"/>
    <property type="match status" value="1"/>
</dbReference>
<dbReference type="InterPro" id="IPR020056">
    <property type="entry name" value="Rbsml_bL25/Gln-tRNA_synth_N"/>
</dbReference>
<dbReference type="InterPro" id="IPR011035">
    <property type="entry name" value="Ribosomal_bL25/Gln-tRNA_synth"/>
</dbReference>
<dbReference type="InterPro" id="IPR020057">
    <property type="entry name" value="Ribosomal_bL25_b-dom"/>
</dbReference>
<dbReference type="InterPro" id="IPR037121">
    <property type="entry name" value="Ribosomal_bL25_C"/>
</dbReference>
<dbReference type="InterPro" id="IPR001021">
    <property type="entry name" value="Ribosomal_bL25_long"/>
</dbReference>
<dbReference type="InterPro" id="IPR029751">
    <property type="entry name" value="Ribosomal_L25_dom"/>
</dbReference>
<dbReference type="InterPro" id="IPR020930">
    <property type="entry name" value="Ribosomal_uL5_bac-type"/>
</dbReference>
<dbReference type="NCBIfam" id="TIGR00731">
    <property type="entry name" value="bL25_bact_ctc"/>
    <property type="match status" value="1"/>
</dbReference>
<dbReference type="PANTHER" id="PTHR33284">
    <property type="entry name" value="RIBOSOMAL PROTEIN L25/GLN-TRNA SYNTHETASE, ANTI-CODON-BINDING DOMAIN-CONTAINING PROTEIN"/>
    <property type="match status" value="1"/>
</dbReference>
<dbReference type="PANTHER" id="PTHR33284:SF1">
    <property type="entry name" value="RIBOSOMAL PROTEIN L25_GLN-TRNA SYNTHETASE, ANTI-CODON-BINDING DOMAIN-CONTAINING PROTEIN"/>
    <property type="match status" value="1"/>
</dbReference>
<dbReference type="Pfam" id="PF01386">
    <property type="entry name" value="Ribosomal_L25p"/>
    <property type="match status" value="1"/>
</dbReference>
<dbReference type="Pfam" id="PF14693">
    <property type="entry name" value="Ribosomal_TL5_C"/>
    <property type="match status" value="1"/>
</dbReference>
<dbReference type="SUPFAM" id="SSF50715">
    <property type="entry name" value="Ribosomal protein L25-like"/>
    <property type="match status" value="1"/>
</dbReference>
<feature type="chain" id="PRO_1000166183" description="Large ribosomal subunit protein bL25">
    <location>
        <begin position="1"/>
        <end position="215"/>
    </location>
</feature>
<feature type="region of interest" description="Disordered" evidence="2">
    <location>
        <begin position="192"/>
        <end position="215"/>
    </location>
</feature>
<feature type="compositionally biased region" description="Acidic residues" evidence="2">
    <location>
        <begin position="192"/>
        <end position="202"/>
    </location>
</feature>
<feature type="compositionally biased region" description="Basic and acidic residues" evidence="2">
    <location>
        <begin position="204"/>
        <end position="215"/>
    </location>
</feature>
<keyword id="KW-0687">Ribonucleoprotein</keyword>
<keyword id="KW-0689">Ribosomal protein</keyword>
<keyword id="KW-0694">RNA-binding</keyword>
<keyword id="KW-0699">rRNA-binding</keyword>
<organism>
    <name type="scientific">Thermotoga neapolitana (strain ATCC 49049 / DSM 4359 / NBRC 107923 / NS-E)</name>
    <dbReference type="NCBI Taxonomy" id="309803"/>
    <lineage>
        <taxon>Bacteria</taxon>
        <taxon>Thermotogati</taxon>
        <taxon>Thermotogota</taxon>
        <taxon>Thermotogae</taxon>
        <taxon>Thermotogales</taxon>
        <taxon>Thermotogaceae</taxon>
        <taxon>Thermotoga</taxon>
    </lineage>
</organism>
<accession>B9K7S4</accession>
<comment type="function">
    <text evidence="1">This is one of the proteins that binds to the 5S RNA in the ribosome where it forms part of the central protuberance.</text>
</comment>
<comment type="subunit">
    <text evidence="1">Part of the 50S ribosomal subunit; part of the 5S rRNA/L5/L18/L25 subcomplex. Contacts the 5S rRNA. Binds to the 5S rRNA independently of L5 and L18.</text>
</comment>
<comment type="similarity">
    <text evidence="1">Belongs to the bacterial ribosomal protein bL25 family. CTC subfamily.</text>
</comment>
<name>RL25_THENN</name>
<evidence type="ECO:0000255" key="1">
    <source>
        <dbReference type="HAMAP-Rule" id="MF_01334"/>
    </source>
</evidence>
<evidence type="ECO:0000256" key="2">
    <source>
        <dbReference type="SAM" id="MobiDB-lite"/>
    </source>
</evidence>
<evidence type="ECO:0000305" key="3"/>
<sequence>MVSLEVRLRTPKGKREAKRLRRRGEVPAVVYGPATDPIPVKIKRSLLEKVFHTITETTPIRLVIKDDEERTVSEKTVFLKMIQRDKVSEAIVHVDFYEPVKGHRMRINVPLKVVGKPVGVEKGGFLEVYHEEIPVETDPDRVPQEIEVDVSSLDLGDVIHARDLKLPEGVKCLLEDEEAVVSILVPKEVSIEEEEVEEEVAEPEVIKRKEEEEEE</sequence>